<reference key="1">
    <citation type="journal article" date="2002" name="Nature">
        <title>The genome sequence of Schizosaccharomyces pombe.</title>
        <authorList>
            <person name="Wood V."/>
            <person name="Gwilliam R."/>
            <person name="Rajandream M.A."/>
            <person name="Lyne M.H."/>
            <person name="Lyne R."/>
            <person name="Stewart A."/>
            <person name="Sgouros J.G."/>
            <person name="Peat N."/>
            <person name="Hayles J."/>
            <person name="Baker S.G."/>
            <person name="Basham D."/>
            <person name="Bowman S."/>
            <person name="Brooks K."/>
            <person name="Brown D."/>
            <person name="Brown S."/>
            <person name="Chillingworth T."/>
            <person name="Churcher C.M."/>
            <person name="Collins M."/>
            <person name="Connor R."/>
            <person name="Cronin A."/>
            <person name="Davis P."/>
            <person name="Feltwell T."/>
            <person name="Fraser A."/>
            <person name="Gentles S."/>
            <person name="Goble A."/>
            <person name="Hamlin N."/>
            <person name="Harris D.E."/>
            <person name="Hidalgo J."/>
            <person name="Hodgson G."/>
            <person name="Holroyd S."/>
            <person name="Hornsby T."/>
            <person name="Howarth S."/>
            <person name="Huckle E.J."/>
            <person name="Hunt S."/>
            <person name="Jagels K."/>
            <person name="James K.D."/>
            <person name="Jones L."/>
            <person name="Jones M."/>
            <person name="Leather S."/>
            <person name="McDonald S."/>
            <person name="McLean J."/>
            <person name="Mooney P."/>
            <person name="Moule S."/>
            <person name="Mungall K.L."/>
            <person name="Murphy L.D."/>
            <person name="Niblett D."/>
            <person name="Odell C."/>
            <person name="Oliver K."/>
            <person name="O'Neil S."/>
            <person name="Pearson D."/>
            <person name="Quail M.A."/>
            <person name="Rabbinowitsch E."/>
            <person name="Rutherford K.M."/>
            <person name="Rutter S."/>
            <person name="Saunders D."/>
            <person name="Seeger K."/>
            <person name="Sharp S."/>
            <person name="Skelton J."/>
            <person name="Simmonds M.N."/>
            <person name="Squares R."/>
            <person name="Squares S."/>
            <person name="Stevens K."/>
            <person name="Taylor K."/>
            <person name="Taylor R.G."/>
            <person name="Tivey A."/>
            <person name="Walsh S.V."/>
            <person name="Warren T."/>
            <person name="Whitehead S."/>
            <person name="Woodward J.R."/>
            <person name="Volckaert G."/>
            <person name="Aert R."/>
            <person name="Robben J."/>
            <person name="Grymonprez B."/>
            <person name="Weltjens I."/>
            <person name="Vanstreels E."/>
            <person name="Rieger M."/>
            <person name="Schaefer M."/>
            <person name="Mueller-Auer S."/>
            <person name="Gabel C."/>
            <person name="Fuchs M."/>
            <person name="Duesterhoeft A."/>
            <person name="Fritzc C."/>
            <person name="Holzer E."/>
            <person name="Moestl D."/>
            <person name="Hilbert H."/>
            <person name="Borzym K."/>
            <person name="Langer I."/>
            <person name="Beck A."/>
            <person name="Lehrach H."/>
            <person name="Reinhardt R."/>
            <person name="Pohl T.M."/>
            <person name="Eger P."/>
            <person name="Zimmermann W."/>
            <person name="Wedler H."/>
            <person name="Wambutt R."/>
            <person name="Purnelle B."/>
            <person name="Goffeau A."/>
            <person name="Cadieu E."/>
            <person name="Dreano S."/>
            <person name="Gloux S."/>
            <person name="Lelaure V."/>
            <person name="Mottier S."/>
            <person name="Galibert F."/>
            <person name="Aves S.J."/>
            <person name="Xiang Z."/>
            <person name="Hunt C."/>
            <person name="Moore K."/>
            <person name="Hurst S.M."/>
            <person name="Lucas M."/>
            <person name="Rochet M."/>
            <person name="Gaillardin C."/>
            <person name="Tallada V.A."/>
            <person name="Garzon A."/>
            <person name="Thode G."/>
            <person name="Daga R.R."/>
            <person name="Cruzado L."/>
            <person name="Jimenez J."/>
            <person name="Sanchez M."/>
            <person name="del Rey F."/>
            <person name="Benito J."/>
            <person name="Dominguez A."/>
            <person name="Revuelta J.L."/>
            <person name="Moreno S."/>
            <person name="Armstrong J."/>
            <person name="Forsburg S.L."/>
            <person name="Cerutti L."/>
            <person name="Lowe T."/>
            <person name="McCombie W.R."/>
            <person name="Paulsen I."/>
            <person name="Potashkin J."/>
            <person name="Shpakovski G.V."/>
            <person name="Ussery D."/>
            <person name="Barrell B.G."/>
            <person name="Nurse P."/>
        </authorList>
    </citation>
    <scope>NUCLEOTIDE SEQUENCE [LARGE SCALE GENOMIC DNA]</scope>
    <source>
        <strain>972 / ATCC 24843</strain>
    </source>
</reference>
<reference key="2">
    <citation type="journal article" date="1997" name="DNA Res.">
        <title>Identification of open reading frames in Schizosaccharomyces pombe cDNAs.</title>
        <authorList>
            <person name="Yoshioka S."/>
            <person name="Kato K."/>
            <person name="Nakai K."/>
            <person name="Okayama H."/>
            <person name="Nojima H."/>
        </authorList>
    </citation>
    <scope>NUCLEOTIDE SEQUENCE [LARGE SCALE MRNA] OF 1-295</scope>
    <source>
        <strain>PR745</strain>
    </source>
</reference>
<reference key="3">
    <citation type="journal article" date="2008" name="J. Proteome Res.">
        <title>Phosphoproteome analysis of fission yeast.</title>
        <authorList>
            <person name="Wilson-Grady J.T."/>
            <person name="Villen J."/>
            <person name="Gygi S.P."/>
        </authorList>
    </citation>
    <scope>PHOSPHORYLATION [LARGE SCALE ANALYSIS] AT SER-62</scope>
    <scope>IDENTIFICATION BY MASS SPECTROMETRY</scope>
</reference>
<accession>O14243</accession>
<accession>P78806</accession>
<name>SNX4_SCHPO</name>
<protein>
    <recommendedName>
        <fullName>Sorting nexin-4</fullName>
    </recommendedName>
    <alternativeName>
        <fullName>Autophagy-related protein 24</fullName>
    </alternativeName>
</protein>
<keyword id="KW-0072">Autophagy</keyword>
<keyword id="KW-0175">Coiled coil</keyword>
<keyword id="KW-0963">Cytoplasm</keyword>
<keyword id="KW-0967">Endosome</keyword>
<keyword id="KW-0446">Lipid-binding</keyword>
<keyword id="KW-0472">Membrane</keyword>
<keyword id="KW-0597">Phosphoprotein</keyword>
<keyword id="KW-0653">Protein transport</keyword>
<keyword id="KW-1185">Reference proteome</keyword>
<keyword id="KW-0813">Transport</keyword>
<evidence type="ECO:0000250" key="1">
    <source>
        <dbReference type="UniProtKB" id="P47057"/>
    </source>
</evidence>
<evidence type="ECO:0000250" key="2">
    <source>
        <dbReference type="UniProtKB" id="Q3UR97"/>
    </source>
</evidence>
<evidence type="ECO:0000250" key="3">
    <source>
        <dbReference type="UniProtKB" id="Q6P4T1"/>
    </source>
</evidence>
<evidence type="ECO:0000250" key="4">
    <source>
        <dbReference type="UniProtKB" id="Q96L94"/>
    </source>
</evidence>
<evidence type="ECO:0000255" key="5"/>
<evidence type="ECO:0000255" key="6">
    <source>
        <dbReference type="PROSITE-ProRule" id="PRU00147"/>
    </source>
</evidence>
<evidence type="ECO:0000269" key="7">
    <source>
    </source>
</evidence>
<evidence type="ECO:0000305" key="8"/>
<organism>
    <name type="scientific">Schizosaccharomyces pombe (strain 972 / ATCC 24843)</name>
    <name type="common">Fission yeast</name>
    <dbReference type="NCBI Taxonomy" id="284812"/>
    <lineage>
        <taxon>Eukaryota</taxon>
        <taxon>Fungi</taxon>
        <taxon>Dikarya</taxon>
        <taxon>Ascomycota</taxon>
        <taxon>Taphrinomycotina</taxon>
        <taxon>Schizosaccharomycetes</taxon>
        <taxon>Schizosaccharomycetales</taxon>
        <taxon>Schizosaccharomycetaceae</taxon>
        <taxon>Schizosaccharomyces</taxon>
    </lineage>
</organism>
<comment type="function">
    <text evidence="1">Sorting nexin, involved in the separation or division of vacuoles throughout the entire life cycle of the cells. Involved in retrieval of late-Golgi SNAREs from post-Golgi endosomes to the trans-Golgi network, for cytoplasm to vacuole transport (Cvt), and autophagy of large cargos including mitophagy, pexophagy and glycophagy.</text>
</comment>
<comment type="subcellular location">
    <subcellularLocation>
        <location evidence="1">Cytoplasm</location>
        <location evidence="1">Cytosol</location>
    </subcellularLocation>
    <subcellularLocation>
        <location evidence="1">Preautophagosomal structure membrane</location>
        <topology evidence="1">Peripheral membrane protein</topology>
    </subcellularLocation>
    <subcellularLocation>
        <location evidence="1">Endosome membrane</location>
        <topology evidence="1">Peripheral membrane protein</topology>
    </subcellularLocation>
    <text evidence="1">Endosome and other perivacuolar punctate structures. Associates to phosphatidylinositol 3-phosphate, necessary for peripheral membrane localization to the perivacuolar punctate structures.</text>
</comment>
<comment type="domain">
    <text evidence="4">The PX domain binds phosphatidylinositol 3-phosphate which is necessary for peripheral membrane localization to the perivacuolar punctate structures.</text>
</comment>
<comment type="similarity">
    <text evidence="8">Belongs to the sorting nexin family.</text>
</comment>
<feature type="chain" id="PRO_0000213817" description="Sorting nexin-4">
    <location>
        <begin position="1"/>
        <end position="401"/>
    </location>
</feature>
<feature type="domain" description="PX" evidence="6">
    <location>
        <begin position="17"/>
        <end position="139"/>
    </location>
</feature>
<feature type="coiled-coil region" evidence="5">
    <location>
        <begin position="190"/>
        <end position="292"/>
    </location>
</feature>
<feature type="binding site" evidence="2">
    <location>
        <position position="60"/>
    </location>
    <ligand>
        <name>a 1,2-diacyl-sn-glycero-3-phospho-(1D-myo-inositol-3-phosphate)</name>
        <dbReference type="ChEBI" id="CHEBI:58088"/>
    </ligand>
</feature>
<feature type="binding site" evidence="4">
    <location>
        <position position="62"/>
    </location>
    <ligand>
        <name>a 1,2-diacyl-sn-glycero-3-phospho-(1D-myo-inositol-3-phosphate)</name>
        <dbReference type="ChEBI" id="CHEBI:58088"/>
    </ligand>
</feature>
<feature type="binding site" evidence="4">
    <location>
        <position position="86"/>
    </location>
    <ligand>
        <name>a 1,2-diacyl-sn-glycero-3-phospho-(1D-myo-inositol-3-phosphate)</name>
        <dbReference type="ChEBI" id="CHEBI:58088"/>
    </ligand>
</feature>
<feature type="binding site" evidence="3">
    <location>
        <position position="105"/>
    </location>
    <ligand>
        <name>a 1,2-diacyl-sn-glycero-3-phospho-(1D-myo-inositol-3-phosphate)</name>
        <dbReference type="ChEBI" id="CHEBI:58088"/>
    </ligand>
</feature>
<feature type="modified residue" description="Phosphoserine" evidence="7">
    <location>
        <position position="62"/>
    </location>
</feature>
<feature type="sequence conflict" description="In Ref. 2; BAA13817." evidence="8" ref="2">
    <original>R</original>
    <variation>P</variation>
    <location>
        <position position="58"/>
    </location>
</feature>
<feature type="sequence conflict" description="In Ref. 2; BAA13817." evidence="8" ref="2">
    <original>K</original>
    <variation>R</variation>
    <location>
        <position position="154"/>
    </location>
</feature>
<feature type="sequence conflict" description="In Ref. 2; BAA13817." evidence="8" ref="2">
    <original>R</original>
    <variation>P</variation>
    <location>
        <position position="276"/>
    </location>
</feature>
<feature type="sequence conflict" description="In Ref. 2." evidence="8" ref="2">
    <original>KLS</original>
    <variation>SFL</variation>
    <location>
        <begin position="293"/>
        <end position="295"/>
    </location>
</feature>
<gene>
    <name type="primary">snx4</name>
    <name type="synonym">atg24</name>
    <name type="ORF">SPAC6F6.12</name>
</gene>
<sequence length="401" mass="46376">MSDSVNLDEPSTNSTHFLQCLVTEPRKELQGSRDTHVSYLIITKTNLSIFTRAECKVRRRFSDFVKLQEILSRMNEDCVVPPLPAKHKLEYIKGGRFSDNFINRRAKLLNRYITRCALHPVLHQSPHFIAFLENPNWNNYVRFFIQPKLNNTSKLDEISDSLLNAFSKLKEEPTEFDIQRDHVQQFMFGISNLEGSIQKLLRLEKALESDYEDVSIQFDRLASLDQALDVPIESIQNALQQTGTEYANLTEKLTLLLDTIKDVESYAHSLKELLKRRDQKQQDVEALQEYSAKLSLERDKISSGGSNGFSLSKTLDDLRGIDHNDTRLKRLEHVQSELQAVEQAIQEASAVHDAFNQRVREESKLFDSVRQSEMLSAISDYANVHVEFFTNIRDLWIRVKQ</sequence>
<proteinExistence type="evidence at protein level"/>
<dbReference type="EMBL" id="CU329670">
    <property type="protein sequence ID" value="CAB11735.1"/>
    <property type="molecule type" value="Genomic_DNA"/>
</dbReference>
<dbReference type="EMBL" id="D89155">
    <property type="protein sequence ID" value="BAA13817.1"/>
    <property type="molecule type" value="mRNA"/>
</dbReference>
<dbReference type="PIR" id="T39046">
    <property type="entry name" value="T39046"/>
</dbReference>
<dbReference type="PIR" id="T42515">
    <property type="entry name" value="T42515"/>
</dbReference>
<dbReference type="RefSeq" id="NP_593905.1">
    <property type="nucleotide sequence ID" value="NM_001019335.2"/>
</dbReference>
<dbReference type="SMR" id="O14243"/>
<dbReference type="BioGRID" id="278889">
    <property type="interactions" value="12"/>
</dbReference>
<dbReference type="FunCoup" id="O14243">
    <property type="interactions" value="211"/>
</dbReference>
<dbReference type="IntAct" id="O14243">
    <property type="interactions" value="1"/>
</dbReference>
<dbReference type="STRING" id="284812.O14243"/>
<dbReference type="iPTMnet" id="O14243"/>
<dbReference type="PaxDb" id="4896-SPAC6F6.12.1"/>
<dbReference type="EnsemblFungi" id="SPAC6F6.12.1">
    <property type="protein sequence ID" value="SPAC6F6.12.1:pep"/>
    <property type="gene ID" value="SPAC6F6.12"/>
</dbReference>
<dbReference type="GeneID" id="2542427"/>
<dbReference type="KEGG" id="spo:2542427"/>
<dbReference type="PomBase" id="SPAC6F6.12"/>
<dbReference type="VEuPathDB" id="FungiDB:SPAC6F6.12"/>
<dbReference type="eggNOG" id="KOG2273">
    <property type="taxonomic scope" value="Eukaryota"/>
</dbReference>
<dbReference type="HOGENOM" id="CLU_027221_0_0_1"/>
<dbReference type="InParanoid" id="O14243"/>
<dbReference type="OMA" id="LQKSGHY"/>
<dbReference type="PhylomeDB" id="O14243"/>
<dbReference type="PRO" id="PR:O14243"/>
<dbReference type="Proteomes" id="UP000002485">
    <property type="component" value="Chromosome I"/>
</dbReference>
<dbReference type="GO" id="GO:0005776">
    <property type="term" value="C:autophagosome"/>
    <property type="evidence" value="ECO:0000266"/>
    <property type="project" value="PomBase"/>
</dbReference>
<dbReference type="GO" id="GO:0005829">
    <property type="term" value="C:cytosol"/>
    <property type="evidence" value="ECO:0007669"/>
    <property type="project" value="UniProtKB-SubCell"/>
</dbReference>
<dbReference type="GO" id="GO:0005769">
    <property type="term" value="C:early endosome"/>
    <property type="evidence" value="ECO:0000318"/>
    <property type="project" value="GO_Central"/>
</dbReference>
<dbReference type="GO" id="GO:0010008">
    <property type="term" value="C:endosome membrane"/>
    <property type="evidence" value="ECO:0007669"/>
    <property type="project" value="UniProtKB-SubCell"/>
</dbReference>
<dbReference type="GO" id="GO:0005794">
    <property type="term" value="C:Golgi apparatus"/>
    <property type="evidence" value="ECO:0007005"/>
    <property type="project" value="PomBase"/>
</dbReference>
<dbReference type="GO" id="GO:0000407">
    <property type="term" value="C:phagophore assembly site"/>
    <property type="evidence" value="ECO:0000314"/>
    <property type="project" value="PomBase"/>
</dbReference>
<dbReference type="GO" id="GO:0034045">
    <property type="term" value="C:phagophore assembly site membrane"/>
    <property type="evidence" value="ECO:0007669"/>
    <property type="project" value="UniProtKB-SubCell"/>
</dbReference>
<dbReference type="GO" id="GO:0032266">
    <property type="term" value="F:phosphatidylinositol-3-phosphate binding"/>
    <property type="evidence" value="ECO:0000266"/>
    <property type="project" value="PomBase"/>
</dbReference>
<dbReference type="GO" id="GO:0032456">
    <property type="term" value="P:endocytic recycling"/>
    <property type="evidence" value="ECO:0000318"/>
    <property type="project" value="GO_Central"/>
</dbReference>
<dbReference type="GO" id="GO:0000423">
    <property type="term" value="P:mitophagy"/>
    <property type="evidence" value="ECO:0000315"/>
    <property type="project" value="PomBase"/>
</dbReference>
<dbReference type="GO" id="GO:0034727">
    <property type="term" value="P:piecemeal microautophagy of the nucleus"/>
    <property type="evidence" value="ECO:0000318"/>
    <property type="project" value="GO_Central"/>
</dbReference>
<dbReference type="GO" id="GO:0015031">
    <property type="term" value="P:protein transport"/>
    <property type="evidence" value="ECO:0000318"/>
    <property type="project" value="GO_Central"/>
</dbReference>
<dbReference type="GO" id="GO:0061709">
    <property type="term" value="P:reticulophagy"/>
    <property type="evidence" value="ECO:0000315"/>
    <property type="project" value="PomBase"/>
</dbReference>
<dbReference type="CDD" id="cd06863">
    <property type="entry name" value="PX_Atg24p"/>
    <property type="match status" value="1"/>
</dbReference>
<dbReference type="Gene3D" id="1.20.1270.60">
    <property type="entry name" value="Arfaptin homology (AH) domain/BAR domain"/>
    <property type="match status" value="1"/>
</dbReference>
<dbReference type="Gene3D" id="3.30.1520.10">
    <property type="entry name" value="Phox-like domain"/>
    <property type="match status" value="1"/>
</dbReference>
<dbReference type="InterPro" id="IPR027267">
    <property type="entry name" value="AH/BAR_dom_sf"/>
</dbReference>
<dbReference type="InterPro" id="IPR001683">
    <property type="entry name" value="PX_dom"/>
</dbReference>
<dbReference type="InterPro" id="IPR036871">
    <property type="entry name" value="PX_dom_sf"/>
</dbReference>
<dbReference type="PANTHER" id="PTHR45949">
    <property type="entry name" value="SORTING NEXIN-4"/>
    <property type="match status" value="1"/>
</dbReference>
<dbReference type="PANTHER" id="PTHR45949:SF4">
    <property type="entry name" value="SORTING NEXIN-4"/>
    <property type="match status" value="1"/>
</dbReference>
<dbReference type="Pfam" id="PF00787">
    <property type="entry name" value="PX"/>
    <property type="match status" value="1"/>
</dbReference>
<dbReference type="SMART" id="SM00312">
    <property type="entry name" value="PX"/>
    <property type="match status" value="1"/>
</dbReference>
<dbReference type="SUPFAM" id="SSF64268">
    <property type="entry name" value="PX domain"/>
    <property type="match status" value="1"/>
</dbReference>
<dbReference type="PROSITE" id="PS50195">
    <property type="entry name" value="PX"/>
    <property type="match status" value="1"/>
</dbReference>